<accession>A6TPX1</accession>
<feature type="chain" id="PRO_1000132083" description="Protein nucleotidyltransferase YdiU">
    <location>
        <begin position="1"/>
        <end position="491"/>
    </location>
</feature>
<feature type="active site" description="Proton acceptor" evidence="1">
    <location>
        <position position="256"/>
    </location>
</feature>
<feature type="binding site" evidence="1">
    <location>
        <position position="94"/>
    </location>
    <ligand>
        <name>ATP</name>
        <dbReference type="ChEBI" id="CHEBI:30616"/>
    </ligand>
</feature>
<feature type="binding site" evidence="1">
    <location>
        <position position="96"/>
    </location>
    <ligand>
        <name>ATP</name>
        <dbReference type="ChEBI" id="CHEBI:30616"/>
    </ligand>
</feature>
<feature type="binding site" evidence="1">
    <location>
        <position position="97"/>
    </location>
    <ligand>
        <name>ATP</name>
        <dbReference type="ChEBI" id="CHEBI:30616"/>
    </ligand>
</feature>
<feature type="binding site" evidence="1">
    <location>
        <position position="117"/>
    </location>
    <ligand>
        <name>ATP</name>
        <dbReference type="ChEBI" id="CHEBI:30616"/>
    </ligand>
</feature>
<feature type="binding site" evidence="1">
    <location>
        <position position="129"/>
    </location>
    <ligand>
        <name>ATP</name>
        <dbReference type="ChEBI" id="CHEBI:30616"/>
    </ligand>
</feature>
<feature type="binding site" evidence="1">
    <location>
        <position position="130"/>
    </location>
    <ligand>
        <name>ATP</name>
        <dbReference type="ChEBI" id="CHEBI:30616"/>
    </ligand>
</feature>
<feature type="binding site" evidence="1">
    <location>
        <position position="180"/>
    </location>
    <ligand>
        <name>ATP</name>
        <dbReference type="ChEBI" id="CHEBI:30616"/>
    </ligand>
</feature>
<feature type="binding site" evidence="1">
    <location>
        <position position="187"/>
    </location>
    <ligand>
        <name>ATP</name>
        <dbReference type="ChEBI" id="CHEBI:30616"/>
    </ligand>
</feature>
<feature type="binding site" evidence="1">
    <location>
        <position position="257"/>
    </location>
    <ligand>
        <name>Mg(2+)</name>
        <dbReference type="ChEBI" id="CHEBI:18420"/>
    </ligand>
</feature>
<feature type="binding site" evidence="1">
    <location>
        <position position="266"/>
    </location>
    <ligand>
        <name>ATP</name>
        <dbReference type="ChEBI" id="CHEBI:30616"/>
    </ligand>
</feature>
<feature type="binding site" evidence="1">
    <location>
        <position position="266"/>
    </location>
    <ligand>
        <name>Mg(2+)</name>
        <dbReference type="ChEBI" id="CHEBI:18420"/>
    </ligand>
</feature>
<protein>
    <recommendedName>
        <fullName evidence="1">Protein nucleotidyltransferase YdiU</fullName>
        <ecNumber evidence="1">2.7.7.-</ecNumber>
    </recommendedName>
    <alternativeName>
        <fullName evidence="1">Protein adenylyltransferase YdiU</fullName>
        <ecNumber evidence="1">2.7.7.108</ecNumber>
    </alternativeName>
    <alternativeName>
        <fullName evidence="1">Protein uridylyltransferase YdiU</fullName>
        <ecNumber evidence="1">2.7.7.-</ecNumber>
    </alternativeName>
</protein>
<reference key="1">
    <citation type="journal article" date="2016" name="Genome Announc.">
        <title>Complete genome sequence of Alkaliphilus metalliredigens strain QYMF, an alkaliphilic and metal-reducing bacterium isolated from borax-contaminated leachate ponds.</title>
        <authorList>
            <person name="Hwang C."/>
            <person name="Copeland A."/>
            <person name="Lucas S."/>
            <person name="Lapidus A."/>
            <person name="Barry K."/>
            <person name="Detter J.C."/>
            <person name="Glavina Del Rio T."/>
            <person name="Hammon N."/>
            <person name="Israni S."/>
            <person name="Dalin E."/>
            <person name="Tice H."/>
            <person name="Pitluck S."/>
            <person name="Chertkov O."/>
            <person name="Brettin T."/>
            <person name="Bruce D."/>
            <person name="Han C."/>
            <person name="Schmutz J."/>
            <person name="Larimer F."/>
            <person name="Land M.L."/>
            <person name="Hauser L."/>
            <person name="Kyrpides N."/>
            <person name="Mikhailova N."/>
            <person name="Ye Q."/>
            <person name="Zhou J."/>
            <person name="Richardson P."/>
            <person name="Fields M.W."/>
        </authorList>
    </citation>
    <scope>NUCLEOTIDE SEQUENCE [LARGE SCALE GENOMIC DNA]</scope>
    <source>
        <strain>QYMF</strain>
    </source>
</reference>
<evidence type="ECO:0000255" key="1">
    <source>
        <dbReference type="HAMAP-Rule" id="MF_00692"/>
    </source>
</evidence>
<comment type="function">
    <text evidence="1">Nucleotidyltransferase involved in the post-translational modification of proteins. It can catalyze the addition of adenosine monophosphate (AMP) or uridine monophosphate (UMP) to a protein, resulting in modifications known as AMPylation and UMPylation.</text>
</comment>
<comment type="catalytic activity">
    <reaction evidence="1">
        <text>L-seryl-[protein] + ATP = 3-O-(5'-adenylyl)-L-seryl-[protein] + diphosphate</text>
        <dbReference type="Rhea" id="RHEA:58120"/>
        <dbReference type="Rhea" id="RHEA-COMP:9863"/>
        <dbReference type="Rhea" id="RHEA-COMP:15073"/>
        <dbReference type="ChEBI" id="CHEBI:29999"/>
        <dbReference type="ChEBI" id="CHEBI:30616"/>
        <dbReference type="ChEBI" id="CHEBI:33019"/>
        <dbReference type="ChEBI" id="CHEBI:142516"/>
        <dbReference type="EC" id="2.7.7.108"/>
    </reaction>
</comment>
<comment type="catalytic activity">
    <reaction evidence="1">
        <text>L-threonyl-[protein] + ATP = 3-O-(5'-adenylyl)-L-threonyl-[protein] + diphosphate</text>
        <dbReference type="Rhea" id="RHEA:54292"/>
        <dbReference type="Rhea" id="RHEA-COMP:11060"/>
        <dbReference type="Rhea" id="RHEA-COMP:13847"/>
        <dbReference type="ChEBI" id="CHEBI:30013"/>
        <dbReference type="ChEBI" id="CHEBI:30616"/>
        <dbReference type="ChEBI" id="CHEBI:33019"/>
        <dbReference type="ChEBI" id="CHEBI:138113"/>
        <dbReference type="EC" id="2.7.7.108"/>
    </reaction>
</comment>
<comment type="catalytic activity">
    <reaction evidence="1">
        <text>L-tyrosyl-[protein] + ATP = O-(5'-adenylyl)-L-tyrosyl-[protein] + diphosphate</text>
        <dbReference type="Rhea" id="RHEA:54288"/>
        <dbReference type="Rhea" id="RHEA-COMP:10136"/>
        <dbReference type="Rhea" id="RHEA-COMP:13846"/>
        <dbReference type="ChEBI" id="CHEBI:30616"/>
        <dbReference type="ChEBI" id="CHEBI:33019"/>
        <dbReference type="ChEBI" id="CHEBI:46858"/>
        <dbReference type="ChEBI" id="CHEBI:83624"/>
        <dbReference type="EC" id="2.7.7.108"/>
    </reaction>
</comment>
<comment type="catalytic activity">
    <reaction evidence="1">
        <text>L-histidyl-[protein] + UTP = N(tele)-(5'-uridylyl)-L-histidyl-[protein] + diphosphate</text>
        <dbReference type="Rhea" id="RHEA:83891"/>
        <dbReference type="Rhea" id="RHEA-COMP:9745"/>
        <dbReference type="Rhea" id="RHEA-COMP:20239"/>
        <dbReference type="ChEBI" id="CHEBI:29979"/>
        <dbReference type="ChEBI" id="CHEBI:33019"/>
        <dbReference type="ChEBI" id="CHEBI:46398"/>
        <dbReference type="ChEBI" id="CHEBI:233474"/>
    </reaction>
</comment>
<comment type="catalytic activity">
    <reaction evidence="1">
        <text>L-seryl-[protein] + UTP = O-(5'-uridylyl)-L-seryl-[protein] + diphosphate</text>
        <dbReference type="Rhea" id="RHEA:64604"/>
        <dbReference type="Rhea" id="RHEA-COMP:9863"/>
        <dbReference type="Rhea" id="RHEA-COMP:16635"/>
        <dbReference type="ChEBI" id="CHEBI:29999"/>
        <dbReference type="ChEBI" id="CHEBI:33019"/>
        <dbReference type="ChEBI" id="CHEBI:46398"/>
        <dbReference type="ChEBI" id="CHEBI:156051"/>
    </reaction>
</comment>
<comment type="catalytic activity">
    <reaction evidence="1">
        <text>L-tyrosyl-[protein] + UTP = O-(5'-uridylyl)-L-tyrosyl-[protein] + diphosphate</text>
        <dbReference type="Rhea" id="RHEA:83887"/>
        <dbReference type="Rhea" id="RHEA-COMP:10136"/>
        <dbReference type="Rhea" id="RHEA-COMP:20238"/>
        <dbReference type="ChEBI" id="CHEBI:33019"/>
        <dbReference type="ChEBI" id="CHEBI:46398"/>
        <dbReference type="ChEBI" id="CHEBI:46858"/>
        <dbReference type="ChEBI" id="CHEBI:90602"/>
    </reaction>
</comment>
<comment type="cofactor">
    <cofactor evidence="1">
        <name>Mg(2+)</name>
        <dbReference type="ChEBI" id="CHEBI:18420"/>
    </cofactor>
    <cofactor evidence="1">
        <name>Mn(2+)</name>
        <dbReference type="ChEBI" id="CHEBI:29035"/>
    </cofactor>
</comment>
<comment type="similarity">
    <text evidence="1">Belongs to the SELO family.</text>
</comment>
<sequence>MTKTKEIIKTGWNLDSTYAHLPKQFFTIITPNPVSAPKLVILNEPLATVLGLDSEALQSKDSLEVLAGNRALEGALPLAQAYAGHQFGHFALLGDGRALLLGEQITPSGERFDLQLKGSGPTPYSRGGDGRASLGPMLREYIISEAMHALGIATTRSLAVVTTGEAVIRETDLPGAILTRVAASHLRVGTFEYIAKWGTVQELRALADYTLQRHFPEVGAVENPYLSLVQEVIKGQAALIAKWQLVGFIHGVMNTDNMTISGETIDYGPCAFMDSYDPKTVFSSIDRQGRYAYGNQPHIAGWNLARFAETLLPLLHEDQDEAVKLAQDEISRFIQLYHSHWLTGMRAKLGIFNEEVQDESLIEELLKMMEKNHADYTNTFRALSFETLEGTALFGTTEFAQWHELWRARLNRQQESKDASQQLMQNSNPGVIPRNHRVEAALDAAVKQGDYSVMEQLLNVLSKPYAHSPEQAEYCMPPAPSNRPYRTFCGT</sequence>
<organism>
    <name type="scientific">Alkaliphilus metalliredigens (strain QYMF)</name>
    <dbReference type="NCBI Taxonomy" id="293826"/>
    <lineage>
        <taxon>Bacteria</taxon>
        <taxon>Bacillati</taxon>
        <taxon>Bacillota</taxon>
        <taxon>Clostridia</taxon>
        <taxon>Peptostreptococcales</taxon>
        <taxon>Natronincolaceae</taxon>
        <taxon>Alkaliphilus</taxon>
    </lineage>
</organism>
<name>SELO_ALKMQ</name>
<dbReference type="EC" id="2.7.7.-" evidence="1"/>
<dbReference type="EC" id="2.7.7.108" evidence="1"/>
<dbReference type="EMBL" id="CP000724">
    <property type="protein sequence ID" value="ABR48239.1"/>
    <property type="molecule type" value="Genomic_DNA"/>
</dbReference>
<dbReference type="SMR" id="A6TPX1"/>
<dbReference type="STRING" id="293826.Amet_2079"/>
<dbReference type="KEGG" id="amt:Amet_2079"/>
<dbReference type="eggNOG" id="COG0397">
    <property type="taxonomic scope" value="Bacteria"/>
</dbReference>
<dbReference type="HOGENOM" id="CLU_010245_4_1_9"/>
<dbReference type="OrthoDB" id="9773505at2"/>
<dbReference type="Proteomes" id="UP000001572">
    <property type="component" value="Chromosome"/>
</dbReference>
<dbReference type="GO" id="GO:0070733">
    <property type="term" value="F:AMPylase activity"/>
    <property type="evidence" value="ECO:0007669"/>
    <property type="project" value="RHEA"/>
</dbReference>
<dbReference type="GO" id="GO:0005524">
    <property type="term" value="F:ATP binding"/>
    <property type="evidence" value="ECO:0007669"/>
    <property type="project" value="UniProtKB-UniRule"/>
</dbReference>
<dbReference type="GO" id="GO:0000287">
    <property type="term" value="F:magnesium ion binding"/>
    <property type="evidence" value="ECO:0007669"/>
    <property type="project" value="UniProtKB-UniRule"/>
</dbReference>
<dbReference type="HAMAP" id="MF_00692">
    <property type="entry name" value="YdiU_SelO"/>
    <property type="match status" value="1"/>
</dbReference>
<dbReference type="InterPro" id="IPR003846">
    <property type="entry name" value="SelO"/>
</dbReference>
<dbReference type="NCBIfam" id="NF000658">
    <property type="entry name" value="PRK00029.1"/>
    <property type="match status" value="1"/>
</dbReference>
<dbReference type="PANTHER" id="PTHR12153:SF15">
    <property type="entry name" value="PROTEIN ADENYLYLTRANSFERASE SELO, MITOCHONDRIAL"/>
    <property type="match status" value="1"/>
</dbReference>
<dbReference type="PANTHER" id="PTHR12153">
    <property type="entry name" value="SELENOPROTEIN O"/>
    <property type="match status" value="1"/>
</dbReference>
<dbReference type="Pfam" id="PF02696">
    <property type="entry name" value="SelO"/>
    <property type="match status" value="1"/>
</dbReference>
<proteinExistence type="inferred from homology"/>
<gene>
    <name evidence="1" type="primary">ydiU</name>
    <name evidence="1" type="synonym">selO</name>
    <name type="ordered locus">Amet_2079</name>
</gene>
<keyword id="KW-0067">ATP-binding</keyword>
<keyword id="KW-0460">Magnesium</keyword>
<keyword id="KW-0464">Manganese</keyword>
<keyword id="KW-0479">Metal-binding</keyword>
<keyword id="KW-0547">Nucleotide-binding</keyword>
<keyword id="KW-0548">Nucleotidyltransferase</keyword>
<keyword id="KW-1185">Reference proteome</keyword>
<keyword id="KW-0808">Transferase</keyword>